<organism>
    <name type="scientific">Coccidioides posadasii (strain C735)</name>
    <name type="common">Valley fever fungus</name>
    <dbReference type="NCBI Taxonomy" id="222929"/>
    <lineage>
        <taxon>Eukaryota</taxon>
        <taxon>Fungi</taxon>
        <taxon>Dikarya</taxon>
        <taxon>Ascomycota</taxon>
        <taxon>Pezizomycotina</taxon>
        <taxon>Eurotiomycetes</taxon>
        <taxon>Eurotiomycetidae</taxon>
        <taxon>Onygenales</taxon>
        <taxon>Onygenaceae</taxon>
        <taxon>Coccidioides</taxon>
    </lineage>
</organism>
<gene>
    <name type="primary">KEX1</name>
    <name type="ORF">CPC735_035110</name>
</gene>
<name>KEX1_COCP7</name>
<feature type="signal peptide" evidence="2">
    <location>
        <begin position="1"/>
        <end position="34"/>
    </location>
</feature>
<feature type="chain" id="PRO_0000411914" description="Pheromone-processing carboxypeptidase KEX1">
    <location>
        <begin position="35"/>
        <end position="641"/>
    </location>
</feature>
<feature type="topological domain" description="Lumenal" evidence="2">
    <location>
        <begin position="35"/>
        <end position="522"/>
    </location>
</feature>
<feature type="transmembrane region" description="Helical" evidence="2">
    <location>
        <begin position="523"/>
        <end position="543"/>
    </location>
</feature>
<feature type="topological domain" description="Cytoplasmic" evidence="2">
    <location>
        <begin position="544"/>
        <end position="641"/>
    </location>
</feature>
<feature type="region of interest" description="Disordered" evidence="3">
    <location>
        <begin position="486"/>
        <end position="506"/>
    </location>
</feature>
<feature type="region of interest" description="Disordered" evidence="3">
    <location>
        <begin position="593"/>
        <end position="641"/>
    </location>
</feature>
<feature type="compositionally biased region" description="Polar residues" evidence="3">
    <location>
        <begin position="494"/>
        <end position="504"/>
    </location>
</feature>
<feature type="compositionally biased region" description="Basic and acidic residues" evidence="3">
    <location>
        <begin position="594"/>
        <end position="604"/>
    </location>
</feature>
<feature type="compositionally biased region" description="Polar residues" evidence="3">
    <location>
        <begin position="631"/>
        <end position="641"/>
    </location>
</feature>
<feature type="active site" evidence="1">
    <location>
        <position position="188"/>
    </location>
</feature>
<feature type="active site" evidence="1">
    <location>
        <position position="389"/>
    </location>
</feature>
<feature type="active site" evidence="1">
    <location>
        <position position="451"/>
    </location>
</feature>
<feature type="glycosylation site" description="N-linked (GlcNAc...) asparagine" evidence="2">
    <location>
        <position position="207"/>
    </location>
</feature>
<feature type="glycosylation site" description="N-linked (GlcNAc...) asparagine" evidence="2">
    <location>
        <position position="440"/>
    </location>
</feature>
<feature type="glycosylation site" description="N-linked (GlcNAc...) asparagine" evidence="2">
    <location>
        <position position="448"/>
    </location>
</feature>
<feature type="glycosylation site" description="N-linked (GlcNAc...) asparagine" evidence="2">
    <location>
        <position position="500"/>
    </location>
</feature>
<proteinExistence type="inferred from homology"/>
<protein>
    <recommendedName>
        <fullName>Pheromone-processing carboxypeptidase KEX1</fullName>
        <ecNumber>3.4.16.6</ecNumber>
    </recommendedName>
    <alternativeName>
        <fullName>Carboxypeptidase D</fullName>
    </alternativeName>
</protein>
<reference key="1">
    <citation type="journal article" date="2009" name="Genome Res.">
        <title>Comparative genomic analyses of the human fungal pathogens Coccidioides and their relatives.</title>
        <authorList>
            <person name="Sharpton T.J."/>
            <person name="Stajich J.E."/>
            <person name="Rounsley S.D."/>
            <person name="Gardner M.J."/>
            <person name="Wortman J.R."/>
            <person name="Jordar V.S."/>
            <person name="Maiti R."/>
            <person name="Kodira C.D."/>
            <person name="Neafsey D.E."/>
            <person name="Zeng Q."/>
            <person name="Hung C.-Y."/>
            <person name="McMahan C."/>
            <person name="Muszewska A."/>
            <person name="Grynberg M."/>
            <person name="Mandel M.A."/>
            <person name="Kellner E.M."/>
            <person name="Barker B.M."/>
            <person name="Galgiani J.N."/>
            <person name="Orbach M.J."/>
            <person name="Kirkland T.N."/>
            <person name="Cole G.T."/>
            <person name="Henn M.R."/>
            <person name="Birren B.W."/>
            <person name="Taylor J.W."/>
        </authorList>
    </citation>
    <scope>NUCLEOTIDE SEQUENCE [LARGE SCALE GENOMIC DNA]</scope>
    <source>
        <strain>C735</strain>
    </source>
</reference>
<keyword id="KW-0053">Apoptosis</keyword>
<keyword id="KW-0121">Carboxypeptidase</keyword>
<keyword id="KW-0325">Glycoprotein</keyword>
<keyword id="KW-0333">Golgi apparatus</keyword>
<keyword id="KW-0378">Hydrolase</keyword>
<keyword id="KW-0472">Membrane</keyword>
<keyword id="KW-0645">Protease</keyword>
<keyword id="KW-0732">Signal</keyword>
<keyword id="KW-0812">Transmembrane</keyword>
<keyword id="KW-1133">Transmembrane helix</keyword>
<accession>C5P635</accession>
<comment type="function">
    <text evidence="1">Protease with a carboxypeptidase B-like function involved in the C-terminal processing of the lysine and arginine residues from protein precursors. Promotes cell fusion and is involved in the programmed cell death (By similarity).</text>
</comment>
<comment type="catalytic activity">
    <reaction>
        <text>Preferential release of a C-terminal arginine or lysine residue.</text>
        <dbReference type="EC" id="3.4.16.6"/>
    </reaction>
</comment>
<comment type="subcellular location">
    <subcellularLocation>
        <location evidence="1">Golgi apparatus</location>
        <location evidence="1">trans-Golgi network membrane</location>
        <topology evidence="1">Single-pass type I membrane protein</topology>
    </subcellularLocation>
</comment>
<comment type="similarity">
    <text evidence="4">Belongs to the peptidase S10 family.</text>
</comment>
<dbReference type="EC" id="3.4.16.6"/>
<dbReference type="EMBL" id="ACFW01000025">
    <property type="protein sequence ID" value="EER28175.1"/>
    <property type="molecule type" value="Genomic_DNA"/>
</dbReference>
<dbReference type="RefSeq" id="XP_003070320.1">
    <property type="nucleotide sequence ID" value="XM_003070274.1"/>
</dbReference>
<dbReference type="SMR" id="C5P635"/>
<dbReference type="ESTHER" id="cocps-kex1">
    <property type="family name" value="Carboxypeptidase_S10"/>
</dbReference>
<dbReference type="MEROPS" id="S10.007"/>
<dbReference type="GlyCosmos" id="C5P635">
    <property type="glycosylation" value="4 sites, No reported glycans"/>
</dbReference>
<dbReference type="GeneID" id="9695815"/>
<dbReference type="KEGG" id="cpw:9695815"/>
<dbReference type="VEuPathDB" id="FungiDB:CPC735_035110"/>
<dbReference type="HOGENOM" id="CLU_008523_11_0_1"/>
<dbReference type="OrthoDB" id="443318at2759"/>
<dbReference type="Proteomes" id="UP000009084">
    <property type="component" value="Unassembled WGS sequence"/>
</dbReference>
<dbReference type="GO" id="GO:0016020">
    <property type="term" value="C:membrane"/>
    <property type="evidence" value="ECO:0007669"/>
    <property type="project" value="UniProtKB-KW"/>
</dbReference>
<dbReference type="GO" id="GO:0005802">
    <property type="term" value="C:trans-Golgi network"/>
    <property type="evidence" value="ECO:0007669"/>
    <property type="project" value="TreeGrafter"/>
</dbReference>
<dbReference type="GO" id="GO:0004185">
    <property type="term" value="F:serine-type carboxypeptidase activity"/>
    <property type="evidence" value="ECO:0007669"/>
    <property type="project" value="UniProtKB-EC"/>
</dbReference>
<dbReference type="GO" id="GO:0006915">
    <property type="term" value="P:apoptotic process"/>
    <property type="evidence" value="ECO:0007669"/>
    <property type="project" value="UniProtKB-KW"/>
</dbReference>
<dbReference type="GO" id="GO:0006508">
    <property type="term" value="P:proteolysis"/>
    <property type="evidence" value="ECO:0007669"/>
    <property type="project" value="UniProtKB-KW"/>
</dbReference>
<dbReference type="FunFam" id="3.40.50.1820:FF:000121">
    <property type="entry name" value="Carboxypeptidase D"/>
    <property type="match status" value="1"/>
</dbReference>
<dbReference type="Gene3D" id="3.40.50.1820">
    <property type="entry name" value="alpha/beta hydrolase"/>
    <property type="match status" value="1"/>
</dbReference>
<dbReference type="InterPro" id="IPR029058">
    <property type="entry name" value="AB_hydrolase_fold"/>
</dbReference>
<dbReference type="InterPro" id="IPR001563">
    <property type="entry name" value="Peptidase_S10"/>
</dbReference>
<dbReference type="PANTHER" id="PTHR11802:SF190">
    <property type="entry name" value="PHEROMONE-PROCESSING CARBOXYPEPTIDASE KEX1"/>
    <property type="match status" value="1"/>
</dbReference>
<dbReference type="PANTHER" id="PTHR11802">
    <property type="entry name" value="SERINE PROTEASE FAMILY S10 SERINE CARBOXYPEPTIDASE"/>
    <property type="match status" value="1"/>
</dbReference>
<dbReference type="Pfam" id="PF00450">
    <property type="entry name" value="Peptidase_S10"/>
    <property type="match status" value="1"/>
</dbReference>
<dbReference type="PRINTS" id="PR00724">
    <property type="entry name" value="CRBOXYPTASEC"/>
</dbReference>
<dbReference type="SUPFAM" id="SSF53474">
    <property type="entry name" value="alpha/beta-Hydrolases"/>
    <property type="match status" value="1"/>
</dbReference>
<evidence type="ECO:0000250" key="1"/>
<evidence type="ECO:0000255" key="2"/>
<evidence type="ECO:0000256" key="3">
    <source>
        <dbReference type="SAM" id="MobiDB-lite"/>
    </source>
</evidence>
<evidence type="ECO:0000305" key="4"/>
<sequence length="641" mass="71773">MRSTSTFTRTPAFLLHTLARWLLVWGVLGSSVVAEKKCASNYYVRSLPGQPDGPLLKMHAGHVEVDHKNNGNLFFWHFQNRHIANRQRTVIWLNGGPGCSSMDGALMEIGPYRLKDDHTLIYNEGSWDEFANILFVDQPVGTGFSYVNTNSYIHELDEMASHFVTFLEKWFELFPEYEHDDLYFAGESYAGQYIPYIAKAILDRNKNTTTQAQSRLWNLKGLLIGNGWISPVEQYQAYLTYAYKENLIQSGTDAAKRVERAHSECISELDSGGKDRIHAGACEKVLSAVLEVTRENGKCINMYDIRLRDEFPSCGMNWPPDLKHITPYLRRDDVISALHVNDDKRTGWRECTGAVSSNFNARNSKPSVQLLPEILESGIPITLFSGAKDFICNHIGTEQFIHNMQWSGGTGFELSPGVWAPRHDWTFEGEAAGYYQEARNLTYVLFYNASHMVPFDFGRRSRDMLDRFLGVDITSIGGNPADSRIDGEKGALTSVGNHPNSTTAEQREKEKLKAATWAAYYKSGEVALVVVAIAAAVWGFFIWRSRRQRQGSGYRGIYPNLNGLSSGSFSGFRNKRSSHDDIEAAADFDASELDTLRGTDDRSRGANGHGSVGGDSEDEDEKFGAQKESYHPSNMPSSSSS</sequence>